<reference key="1">
    <citation type="journal article" date="1995" name="Plant Mol. Biol. Rep.">
        <title>The chloroplast genome of a chlorophyll a+c-containing alga, Odontella sinensis.</title>
        <authorList>
            <person name="Kowallik K.V."/>
            <person name="Stoebe B."/>
            <person name="Schaffran I."/>
            <person name="Kroth-Pancic P."/>
            <person name="Freier U."/>
        </authorList>
    </citation>
    <scope>NUCLEOTIDE SEQUENCE [LARGE SCALE GENOMIC DNA]</scope>
</reference>
<evidence type="ECO:0000255" key="1">
    <source>
        <dbReference type="HAMAP-Rule" id="MF_00396"/>
    </source>
</evidence>
<keyword id="KW-0150">Chloroplast</keyword>
<keyword id="KW-0249">Electron transport</keyword>
<keyword id="KW-0472">Membrane</keyword>
<keyword id="KW-0602">Photosynthesis</keyword>
<keyword id="KW-0934">Plastid</keyword>
<keyword id="KW-0793">Thylakoid</keyword>
<keyword id="KW-0812">Transmembrane</keyword>
<keyword id="KW-1133">Transmembrane helix</keyword>
<keyword id="KW-0813">Transport</keyword>
<gene>
    <name evidence="1" type="primary">petM</name>
    <name type="synonym">ycf31</name>
</gene>
<proteinExistence type="inferred from homology"/>
<dbReference type="EMBL" id="Z67753">
    <property type="protein sequence ID" value="CAA91700.1"/>
    <property type="molecule type" value="Genomic_DNA"/>
</dbReference>
<dbReference type="PIR" id="S78327">
    <property type="entry name" value="S78327"/>
</dbReference>
<dbReference type="SMR" id="P49531"/>
<dbReference type="GO" id="GO:0009535">
    <property type="term" value="C:chloroplast thylakoid membrane"/>
    <property type="evidence" value="ECO:0007669"/>
    <property type="project" value="UniProtKB-SubCell"/>
</dbReference>
<dbReference type="GO" id="GO:0009512">
    <property type="term" value="C:cytochrome b6f complex"/>
    <property type="evidence" value="ECO:0007669"/>
    <property type="project" value="InterPro"/>
</dbReference>
<dbReference type="GO" id="GO:0009055">
    <property type="term" value="F:electron transfer activity"/>
    <property type="evidence" value="ECO:0007669"/>
    <property type="project" value="UniProtKB-UniRule"/>
</dbReference>
<dbReference type="GO" id="GO:0015979">
    <property type="term" value="P:photosynthesis"/>
    <property type="evidence" value="ECO:0007669"/>
    <property type="project" value="UniProtKB-KW"/>
</dbReference>
<dbReference type="HAMAP" id="MF_00396">
    <property type="entry name" value="Cytb6_f_PetM"/>
    <property type="match status" value="1"/>
</dbReference>
<dbReference type="InterPro" id="IPR012595">
    <property type="entry name" value="PetM_cyt_b6/f_cplx_su7"/>
</dbReference>
<dbReference type="Pfam" id="PF08041">
    <property type="entry name" value="PetM"/>
    <property type="match status" value="1"/>
</dbReference>
<organism>
    <name type="scientific">Trieres chinensis</name>
    <name type="common">Marine centric diatom</name>
    <name type="synonym">Odontella sinensis</name>
    <dbReference type="NCBI Taxonomy" id="1514140"/>
    <lineage>
        <taxon>Eukaryota</taxon>
        <taxon>Sar</taxon>
        <taxon>Stramenopiles</taxon>
        <taxon>Ochrophyta</taxon>
        <taxon>Bacillariophyta</taxon>
        <taxon>Mediophyceae</taxon>
        <taxon>Biddulphiophycidae</taxon>
        <taxon>Eupodiscales</taxon>
        <taxon>Parodontellaceae</taxon>
        <taxon>Trieres</taxon>
    </lineage>
</organism>
<name>PETM_TRICV</name>
<sequence length="42" mass="4504">MALVLKIFPYANAEIVTAAVTCIFMVLFGLSLGFALLKVQGE</sequence>
<comment type="function">
    <text evidence="1">Component of the cytochrome b6-f complex, which mediates electron transfer between photosystem II (PSII) and photosystem I (PSI), cyclic electron flow around PSI, and state transitions.</text>
</comment>
<comment type="subunit">
    <text evidence="1">The 4 large subunits of the cytochrome b6-f complex are cytochrome b6, subunit IV (17 kDa polypeptide, PetD), cytochrome f and the Rieske protein, while the 4 small subunits are PetG, PetL, PetM and PetN. The complex functions as a dimer.</text>
</comment>
<comment type="subcellular location">
    <subcellularLocation>
        <location evidence="1">Plastid</location>
        <location evidence="1">Chloroplast thylakoid membrane</location>
        <topology evidence="1">Single-pass membrane protein</topology>
    </subcellularLocation>
</comment>
<comment type="similarity">
    <text evidence="1">Belongs to the PetM family.</text>
</comment>
<protein>
    <recommendedName>
        <fullName evidence="1">Cytochrome b6-f complex subunit 7</fullName>
    </recommendedName>
    <alternativeName>
        <fullName evidence="1">Cytochrome b6-f complex subunit PetM</fullName>
    </alternativeName>
    <alternativeName>
        <fullName evidence="1">Cytochrome b6-f complex subunit VII</fullName>
    </alternativeName>
</protein>
<accession>P49531</accession>
<feature type="chain" id="PRO_0000218011" description="Cytochrome b6-f complex subunit 7">
    <location>
        <begin position="1"/>
        <end position="42"/>
    </location>
</feature>
<feature type="transmembrane region" description="Helical" evidence="1">
    <location>
        <begin position="15"/>
        <end position="35"/>
    </location>
</feature>
<geneLocation type="chloroplast"/>